<evidence type="ECO:0000255" key="1">
    <source>
        <dbReference type="HAMAP-Rule" id="MF_01227"/>
    </source>
</evidence>
<name>PYRG_SHESM</name>
<accession>Q0HL73</accession>
<sequence>MTTRYIFVTGGVVSSLGKGIAAASLAAILEARGLNVTIMKLDPYINVDPGTMSPTQHGEVFVTEDGAETDLDLGHYERFIRTKMNRRNNFTTGRIYEEVLRKERRGDYLGATIQVIPHITNAIKEKVIAGGEGHDVAIVEIGGTVGDIESLPFLESIRQLGVELGRDRTLFMHLTLVPFLGAAGEVKTKPTQHSVKELRSIGIAPDVLICRGDRAIPANERAKISLFCNVEERAVISLKDVDSIYKIPALLRSQGLDDLVVKRFGLECREADLSEWENVIYQEANPNGEVVIGMVGKYIELPDAYKSVNEALKHAGLKNRVSVTIKYIDSQTVEAKGDEVLQGLDGILVPGGFGERGVEGKILAAKYARENELPYFGICLGMQVALIEFARNVAGMADAHSTEFNKATPFPVVGLITEWVDEEGNVEQRHEASDLGGTMRLGAQLCHLLEGSKAAQAYKGNTCVERHRHRYEVNNKYRERLEQAGLVFSGLSSDRKLVEMIELKDHPWFVAGQFHPEFTSTPRDGHPLFEGFVAAASAHQKRDLKK</sequence>
<protein>
    <recommendedName>
        <fullName evidence="1">CTP synthase</fullName>
        <ecNumber evidence="1">6.3.4.2</ecNumber>
    </recommendedName>
    <alternativeName>
        <fullName evidence="1">Cytidine 5'-triphosphate synthase</fullName>
    </alternativeName>
    <alternativeName>
        <fullName evidence="1">Cytidine triphosphate synthetase</fullName>
        <shortName evidence="1">CTP synthetase</shortName>
        <shortName evidence="1">CTPS</shortName>
    </alternativeName>
    <alternativeName>
        <fullName evidence="1">UTP--ammonia ligase</fullName>
    </alternativeName>
</protein>
<proteinExistence type="inferred from homology"/>
<comment type="function">
    <text evidence="1">Catalyzes the ATP-dependent amination of UTP to CTP with either L-glutamine or ammonia as the source of nitrogen. Regulates intracellular CTP levels through interactions with the four ribonucleotide triphosphates.</text>
</comment>
<comment type="catalytic activity">
    <reaction evidence="1">
        <text>UTP + L-glutamine + ATP + H2O = CTP + L-glutamate + ADP + phosphate + 2 H(+)</text>
        <dbReference type="Rhea" id="RHEA:26426"/>
        <dbReference type="ChEBI" id="CHEBI:15377"/>
        <dbReference type="ChEBI" id="CHEBI:15378"/>
        <dbReference type="ChEBI" id="CHEBI:29985"/>
        <dbReference type="ChEBI" id="CHEBI:30616"/>
        <dbReference type="ChEBI" id="CHEBI:37563"/>
        <dbReference type="ChEBI" id="CHEBI:43474"/>
        <dbReference type="ChEBI" id="CHEBI:46398"/>
        <dbReference type="ChEBI" id="CHEBI:58359"/>
        <dbReference type="ChEBI" id="CHEBI:456216"/>
        <dbReference type="EC" id="6.3.4.2"/>
    </reaction>
</comment>
<comment type="catalytic activity">
    <reaction evidence="1">
        <text>L-glutamine + H2O = L-glutamate + NH4(+)</text>
        <dbReference type="Rhea" id="RHEA:15889"/>
        <dbReference type="ChEBI" id="CHEBI:15377"/>
        <dbReference type="ChEBI" id="CHEBI:28938"/>
        <dbReference type="ChEBI" id="CHEBI:29985"/>
        <dbReference type="ChEBI" id="CHEBI:58359"/>
    </reaction>
</comment>
<comment type="catalytic activity">
    <reaction evidence="1">
        <text>UTP + NH4(+) + ATP = CTP + ADP + phosphate + 2 H(+)</text>
        <dbReference type="Rhea" id="RHEA:16597"/>
        <dbReference type="ChEBI" id="CHEBI:15378"/>
        <dbReference type="ChEBI" id="CHEBI:28938"/>
        <dbReference type="ChEBI" id="CHEBI:30616"/>
        <dbReference type="ChEBI" id="CHEBI:37563"/>
        <dbReference type="ChEBI" id="CHEBI:43474"/>
        <dbReference type="ChEBI" id="CHEBI:46398"/>
        <dbReference type="ChEBI" id="CHEBI:456216"/>
    </reaction>
</comment>
<comment type="activity regulation">
    <text evidence="1">Allosterically activated by GTP, when glutamine is the substrate; GTP has no effect on the reaction when ammonia is the substrate. The allosteric effector GTP functions by stabilizing the protein conformation that binds the tetrahedral intermediate(s) formed during glutamine hydrolysis. Inhibited by the product CTP, via allosteric rather than competitive inhibition.</text>
</comment>
<comment type="pathway">
    <text evidence="1">Pyrimidine metabolism; CTP biosynthesis via de novo pathway; CTP from UDP: step 2/2.</text>
</comment>
<comment type="subunit">
    <text evidence="1">Homotetramer.</text>
</comment>
<comment type="miscellaneous">
    <text evidence="1">CTPSs have evolved a hybrid strategy for distinguishing between UTP and CTP. The overlapping regions of the product feedback inhibitory and substrate sites recognize a common feature in both compounds, the triphosphate moiety. To differentiate isosteric substrate and product pyrimidine rings, an additional pocket far from the expected kinase/ligase catalytic site, specifically recognizes the cytosine and ribose portions of the product inhibitor.</text>
</comment>
<comment type="similarity">
    <text evidence="1">Belongs to the CTP synthase family.</text>
</comment>
<organism>
    <name type="scientific">Shewanella sp. (strain MR-4)</name>
    <dbReference type="NCBI Taxonomy" id="60480"/>
    <lineage>
        <taxon>Bacteria</taxon>
        <taxon>Pseudomonadati</taxon>
        <taxon>Pseudomonadota</taxon>
        <taxon>Gammaproteobacteria</taxon>
        <taxon>Alteromonadales</taxon>
        <taxon>Shewanellaceae</taxon>
        <taxon>Shewanella</taxon>
    </lineage>
</organism>
<keyword id="KW-0067">ATP-binding</keyword>
<keyword id="KW-0315">Glutamine amidotransferase</keyword>
<keyword id="KW-0436">Ligase</keyword>
<keyword id="KW-0460">Magnesium</keyword>
<keyword id="KW-0479">Metal-binding</keyword>
<keyword id="KW-0547">Nucleotide-binding</keyword>
<keyword id="KW-0665">Pyrimidine biosynthesis</keyword>
<feature type="chain" id="PRO_0000266215" description="CTP synthase">
    <location>
        <begin position="1"/>
        <end position="546"/>
    </location>
</feature>
<feature type="domain" description="Glutamine amidotransferase type-1" evidence="1">
    <location>
        <begin position="291"/>
        <end position="542"/>
    </location>
</feature>
<feature type="region of interest" description="Amidoligase domain" evidence="1">
    <location>
        <begin position="1"/>
        <end position="266"/>
    </location>
</feature>
<feature type="active site" description="Nucleophile; for glutamine hydrolysis" evidence="1">
    <location>
        <position position="379"/>
    </location>
</feature>
<feature type="active site" evidence="1">
    <location>
        <position position="515"/>
    </location>
</feature>
<feature type="active site" evidence="1">
    <location>
        <position position="517"/>
    </location>
</feature>
<feature type="binding site" evidence="1">
    <location>
        <position position="14"/>
    </location>
    <ligand>
        <name>CTP</name>
        <dbReference type="ChEBI" id="CHEBI:37563"/>
        <note>allosteric inhibitor</note>
    </ligand>
</feature>
<feature type="binding site" evidence="1">
    <location>
        <position position="14"/>
    </location>
    <ligand>
        <name>UTP</name>
        <dbReference type="ChEBI" id="CHEBI:46398"/>
    </ligand>
</feature>
<feature type="binding site" evidence="1">
    <location>
        <begin position="15"/>
        <end position="20"/>
    </location>
    <ligand>
        <name>ATP</name>
        <dbReference type="ChEBI" id="CHEBI:30616"/>
    </ligand>
</feature>
<feature type="binding site" evidence="1">
    <location>
        <position position="72"/>
    </location>
    <ligand>
        <name>ATP</name>
        <dbReference type="ChEBI" id="CHEBI:30616"/>
    </ligand>
</feature>
<feature type="binding site" evidence="1">
    <location>
        <position position="72"/>
    </location>
    <ligand>
        <name>Mg(2+)</name>
        <dbReference type="ChEBI" id="CHEBI:18420"/>
    </ligand>
</feature>
<feature type="binding site" evidence="1">
    <location>
        <position position="140"/>
    </location>
    <ligand>
        <name>Mg(2+)</name>
        <dbReference type="ChEBI" id="CHEBI:18420"/>
    </ligand>
</feature>
<feature type="binding site" evidence="1">
    <location>
        <begin position="147"/>
        <end position="149"/>
    </location>
    <ligand>
        <name>CTP</name>
        <dbReference type="ChEBI" id="CHEBI:37563"/>
        <note>allosteric inhibitor</note>
    </ligand>
</feature>
<feature type="binding site" evidence="1">
    <location>
        <begin position="187"/>
        <end position="192"/>
    </location>
    <ligand>
        <name>CTP</name>
        <dbReference type="ChEBI" id="CHEBI:37563"/>
        <note>allosteric inhibitor</note>
    </ligand>
</feature>
<feature type="binding site" evidence="1">
    <location>
        <begin position="187"/>
        <end position="192"/>
    </location>
    <ligand>
        <name>UTP</name>
        <dbReference type="ChEBI" id="CHEBI:46398"/>
    </ligand>
</feature>
<feature type="binding site" evidence="1">
    <location>
        <position position="223"/>
    </location>
    <ligand>
        <name>CTP</name>
        <dbReference type="ChEBI" id="CHEBI:37563"/>
        <note>allosteric inhibitor</note>
    </ligand>
</feature>
<feature type="binding site" evidence="1">
    <location>
        <position position="223"/>
    </location>
    <ligand>
        <name>UTP</name>
        <dbReference type="ChEBI" id="CHEBI:46398"/>
    </ligand>
</feature>
<feature type="binding site" evidence="1">
    <location>
        <begin position="239"/>
        <end position="241"/>
    </location>
    <ligand>
        <name>ATP</name>
        <dbReference type="ChEBI" id="CHEBI:30616"/>
    </ligand>
</feature>
<feature type="binding site" evidence="1">
    <location>
        <position position="352"/>
    </location>
    <ligand>
        <name>L-glutamine</name>
        <dbReference type="ChEBI" id="CHEBI:58359"/>
    </ligand>
</feature>
<feature type="binding site" evidence="1">
    <location>
        <begin position="380"/>
        <end position="383"/>
    </location>
    <ligand>
        <name>L-glutamine</name>
        <dbReference type="ChEBI" id="CHEBI:58359"/>
    </ligand>
</feature>
<feature type="binding site" evidence="1">
    <location>
        <position position="403"/>
    </location>
    <ligand>
        <name>L-glutamine</name>
        <dbReference type="ChEBI" id="CHEBI:58359"/>
    </ligand>
</feature>
<feature type="binding site" evidence="1">
    <location>
        <position position="470"/>
    </location>
    <ligand>
        <name>L-glutamine</name>
        <dbReference type="ChEBI" id="CHEBI:58359"/>
    </ligand>
</feature>
<dbReference type="EC" id="6.3.4.2" evidence="1"/>
<dbReference type="EMBL" id="CP000446">
    <property type="protein sequence ID" value="ABI38194.1"/>
    <property type="molecule type" value="Genomic_DNA"/>
</dbReference>
<dbReference type="RefSeq" id="WP_011621903.1">
    <property type="nucleotide sequence ID" value="NC_008321.1"/>
</dbReference>
<dbReference type="SMR" id="Q0HL73"/>
<dbReference type="KEGG" id="she:Shewmr4_1114"/>
<dbReference type="HOGENOM" id="CLU_011675_5_0_6"/>
<dbReference type="UniPathway" id="UPA00159">
    <property type="reaction ID" value="UER00277"/>
</dbReference>
<dbReference type="GO" id="GO:0005829">
    <property type="term" value="C:cytosol"/>
    <property type="evidence" value="ECO:0007669"/>
    <property type="project" value="TreeGrafter"/>
</dbReference>
<dbReference type="GO" id="GO:0005524">
    <property type="term" value="F:ATP binding"/>
    <property type="evidence" value="ECO:0007669"/>
    <property type="project" value="UniProtKB-KW"/>
</dbReference>
<dbReference type="GO" id="GO:0003883">
    <property type="term" value="F:CTP synthase activity"/>
    <property type="evidence" value="ECO:0007669"/>
    <property type="project" value="UniProtKB-UniRule"/>
</dbReference>
<dbReference type="GO" id="GO:0004359">
    <property type="term" value="F:glutaminase activity"/>
    <property type="evidence" value="ECO:0007669"/>
    <property type="project" value="RHEA"/>
</dbReference>
<dbReference type="GO" id="GO:0042802">
    <property type="term" value="F:identical protein binding"/>
    <property type="evidence" value="ECO:0007669"/>
    <property type="project" value="TreeGrafter"/>
</dbReference>
<dbReference type="GO" id="GO:0046872">
    <property type="term" value="F:metal ion binding"/>
    <property type="evidence" value="ECO:0007669"/>
    <property type="project" value="UniProtKB-KW"/>
</dbReference>
<dbReference type="GO" id="GO:0044210">
    <property type="term" value="P:'de novo' CTP biosynthetic process"/>
    <property type="evidence" value="ECO:0007669"/>
    <property type="project" value="UniProtKB-UniRule"/>
</dbReference>
<dbReference type="GO" id="GO:0019856">
    <property type="term" value="P:pyrimidine nucleobase biosynthetic process"/>
    <property type="evidence" value="ECO:0007669"/>
    <property type="project" value="TreeGrafter"/>
</dbReference>
<dbReference type="CDD" id="cd03113">
    <property type="entry name" value="CTPS_N"/>
    <property type="match status" value="1"/>
</dbReference>
<dbReference type="CDD" id="cd01746">
    <property type="entry name" value="GATase1_CTP_Synthase"/>
    <property type="match status" value="1"/>
</dbReference>
<dbReference type="FunFam" id="3.40.50.300:FF:000009">
    <property type="entry name" value="CTP synthase"/>
    <property type="match status" value="1"/>
</dbReference>
<dbReference type="FunFam" id="3.40.50.880:FF:000002">
    <property type="entry name" value="CTP synthase"/>
    <property type="match status" value="1"/>
</dbReference>
<dbReference type="Gene3D" id="3.40.50.880">
    <property type="match status" value="1"/>
</dbReference>
<dbReference type="Gene3D" id="3.40.50.300">
    <property type="entry name" value="P-loop containing nucleotide triphosphate hydrolases"/>
    <property type="match status" value="1"/>
</dbReference>
<dbReference type="HAMAP" id="MF_01227">
    <property type="entry name" value="PyrG"/>
    <property type="match status" value="1"/>
</dbReference>
<dbReference type="InterPro" id="IPR029062">
    <property type="entry name" value="Class_I_gatase-like"/>
</dbReference>
<dbReference type="InterPro" id="IPR004468">
    <property type="entry name" value="CTP_synthase"/>
</dbReference>
<dbReference type="InterPro" id="IPR017456">
    <property type="entry name" value="CTP_synthase_N"/>
</dbReference>
<dbReference type="InterPro" id="IPR017926">
    <property type="entry name" value="GATASE"/>
</dbReference>
<dbReference type="InterPro" id="IPR033828">
    <property type="entry name" value="GATase1_CTP_Synthase"/>
</dbReference>
<dbReference type="InterPro" id="IPR027417">
    <property type="entry name" value="P-loop_NTPase"/>
</dbReference>
<dbReference type="NCBIfam" id="NF003792">
    <property type="entry name" value="PRK05380.1"/>
    <property type="match status" value="1"/>
</dbReference>
<dbReference type="NCBIfam" id="TIGR00337">
    <property type="entry name" value="PyrG"/>
    <property type="match status" value="1"/>
</dbReference>
<dbReference type="PANTHER" id="PTHR11550">
    <property type="entry name" value="CTP SYNTHASE"/>
    <property type="match status" value="1"/>
</dbReference>
<dbReference type="PANTHER" id="PTHR11550:SF0">
    <property type="entry name" value="CTP SYNTHASE-RELATED"/>
    <property type="match status" value="1"/>
</dbReference>
<dbReference type="Pfam" id="PF06418">
    <property type="entry name" value="CTP_synth_N"/>
    <property type="match status" value="1"/>
</dbReference>
<dbReference type="Pfam" id="PF00117">
    <property type="entry name" value="GATase"/>
    <property type="match status" value="1"/>
</dbReference>
<dbReference type="SUPFAM" id="SSF52317">
    <property type="entry name" value="Class I glutamine amidotransferase-like"/>
    <property type="match status" value="1"/>
</dbReference>
<dbReference type="SUPFAM" id="SSF52540">
    <property type="entry name" value="P-loop containing nucleoside triphosphate hydrolases"/>
    <property type="match status" value="1"/>
</dbReference>
<dbReference type="PROSITE" id="PS51273">
    <property type="entry name" value="GATASE_TYPE_1"/>
    <property type="match status" value="1"/>
</dbReference>
<reference key="1">
    <citation type="submission" date="2006-08" db="EMBL/GenBank/DDBJ databases">
        <title>Complete sequence of Shewanella sp. MR-4.</title>
        <authorList>
            <consortium name="US DOE Joint Genome Institute"/>
            <person name="Copeland A."/>
            <person name="Lucas S."/>
            <person name="Lapidus A."/>
            <person name="Barry K."/>
            <person name="Detter J.C."/>
            <person name="Glavina del Rio T."/>
            <person name="Hammon N."/>
            <person name="Israni S."/>
            <person name="Dalin E."/>
            <person name="Tice H."/>
            <person name="Pitluck S."/>
            <person name="Kiss H."/>
            <person name="Brettin T."/>
            <person name="Bruce D."/>
            <person name="Han C."/>
            <person name="Tapia R."/>
            <person name="Gilna P."/>
            <person name="Schmutz J."/>
            <person name="Larimer F."/>
            <person name="Land M."/>
            <person name="Hauser L."/>
            <person name="Kyrpides N."/>
            <person name="Mikhailova N."/>
            <person name="Nealson K."/>
            <person name="Konstantinidis K."/>
            <person name="Klappenbach J."/>
            <person name="Tiedje J."/>
            <person name="Richardson P."/>
        </authorList>
    </citation>
    <scope>NUCLEOTIDE SEQUENCE [LARGE SCALE GENOMIC DNA]</scope>
    <source>
        <strain>MR-4</strain>
    </source>
</reference>
<gene>
    <name evidence="1" type="primary">pyrG</name>
    <name type="ordered locus">Shewmr4_1114</name>
</gene>